<keyword id="KW-0031">Aminopeptidase</keyword>
<keyword id="KW-0963">Cytoplasm</keyword>
<keyword id="KW-0378">Hydrolase</keyword>
<keyword id="KW-0479">Metal-binding</keyword>
<keyword id="KW-0482">Metalloprotease</keyword>
<keyword id="KW-0645">Protease</keyword>
<keyword id="KW-1185">Reference proteome</keyword>
<keyword id="KW-0862">Zinc</keyword>
<accession>Q8FGG0</accession>
<reference key="1">
    <citation type="journal article" date="2002" name="Proc. Natl. Acad. Sci. U.S.A.">
        <title>Extensive mosaic structure revealed by the complete genome sequence of uropathogenic Escherichia coli.</title>
        <authorList>
            <person name="Welch R.A."/>
            <person name="Burland V."/>
            <person name="Plunkett G. III"/>
            <person name="Redford P."/>
            <person name="Roesch P."/>
            <person name="Rasko D."/>
            <person name="Buckles E.L."/>
            <person name="Liou S.-R."/>
            <person name="Boutin A."/>
            <person name="Hackett J."/>
            <person name="Stroud D."/>
            <person name="Mayhew G.F."/>
            <person name="Rose D.J."/>
            <person name="Zhou S."/>
            <person name="Schwartz D.C."/>
            <person name="Perna N.T."/>
            <person name="Mobley H.L.T."/>
            <person name="Donnenberg M.S."/>
            <person name="Blattner F.R."/>
        </authorList>
    </citation>
    <scope>NUCLEOTIDE SEQUENCE [LARGE SCALE GENOMIC DNA]</scope>
    <source>
        <strain>CFT073 / ATCC 700928 / UPEC</strain>
    </source>
</reference>
<comment type="function">
    <text evidence="1">Involved in the modulation of the activity of the glucose-phosphotransferase system (glucose-PTS). Interacts with the transcriptional repressor Mlc, preventing its interaction with DNA and leading to the modulation of expression of genes regulated by Mlc, including ptsG, which encodes the PTS system glucose-specific EIICB component.</text>
</comment>
<comment type="function">
    <text evidence="1">Shows zinc-dependent metallopeptidase activity.</text>
</comment>
<comment type="cofactor">
    <cofactor evidence="1">
        <name>Zn(2+)</name>
        <dbReference type="ChEBI" id="CHEBI:29105"/>
    </cofactor>
    <text evidence="1">Binds 1 zinc ion per subunit.</text>
</comment>
<comment type="subunit">
    <text evidence="1">Interacts with Mlc.</text>
</comment>
<comment type="subcellular location">
    <subcellularLocation>
        <location evidence="1">Cytoplasm</location>
    </subcellularLocation>
</comment>
<comment type="similarity">
    <text evidence="1">Belongs to the MtfA family.</text>
</comment>
<comment type="sequence caution" evidence="2">
    <conflict type="erroneous initiation">
        <sequence resource="EMBL-CDS" id="AAN80876"/>
    </conflict>
</comment>
<feature type="chain" id="PRO_0000316314" description="Mlc titration factor A">
    <location>
        <begin position="1"/>
        <end position="265"/>
    </location>
</feature>
<feature type="binding site" evidence="1">
    <location>
        <position position="111"/>
    </location>
    <ligand>
        <name>Zn(2+)</name>
        <dbReference type="ChEBI" id="CHEBI:29105"/>
    </ligand>
</feature>
<feature type="binding site" evidence="1">
    <location>
        <position position="148"/>
    </location>
    <ligand>
        <name>Zn(2+)</name>
        <dbReference type="ChEBI" id="CHEBI:29105"/>
    </ligand>
</feature>
<feature type="binding site" evidence="1">
    <location>
        <position position="152"/>
    </location>
    <ligand>
        <name>Zn(2+)</name>
        <dbReference type="ChEBI" id="CHEBI:29105"/>
    </ligand>
</feature>
<feature type="binding site" evidence="1">
    <location>
        <position position="211"/>
    </location>
    <ligand>
        <name>Zn(2+)</name>
        <dbReference type="ChEBI" id="CHEBI:29105"/>
    </ligand>
</feature>
<evidence type="ECO:0000255" key="1">
    <source>
        <dbReference type="HAMAP-Rule" id="MF_01593"/>
    </source>
</evidence>
<evidence type="ECO:0000305" key="2"/>
<organism>
    <name type="scientific">Escherichia coli O6:H1 (strain CFT073 / ATCC 700928 / UPEC)</name>
    <dbReference type="NCBI Taxonomy" id="199310"/>
    <lineage>
        <taxon>Bacteria</taxon>
        <taxon>Pseudomonadati</taxon>
        <taxon>Pseudomonadota</taxon>
        <taxon>Gammaproteobacteria</taxon>
        <taxon>Enterobacterales</taxon>
        <taxon>Enterobacteriaceae</taxon>
        <taxon>Escherichia</taxon>
    </lineage>
</organism>
<proteinExistence type="inferred from homology"/>
<sequence length="265" mass="30238">MIKWPWKVQESAHQTALPWQEALSIPLLTCLTEQEQSKLVALAERFLQQKRLVPLQGFELNSLRSCRIALLFCLPVLELGLEWLDGFHEVLIYPAPFVVDDEWEDDIGLVHNQRIVQSGQSWQQGPIVLNWLDIQDSFDASGFNLIIHEVAHKLDTRNGDRASGVPFISLREVAGWEHDLHAAMNNIQEEIELVGENAASIDAYAASDPAECFAVLSEYFFSAPELFAPRFPSLWQRFCQFYQQDPLQRLHHANDTDSFSATNVH</sequence>
<protein>
    <recommendedName>
        <fullName evidence="1">Mlc titration factor A</fullName>
    </recommendedName>
    <alternativeName>
        <fullName evidence="1">Probable zinc metallopeptidase MtfA</fullName>
        <ecNumber evidence="1">3.4.11.-</ecNumber>
    </alternativeName>
</protein>
<name>MTFA_ECOL6</name>
<dbReference type="EC" id="3.4.11.-" evidence="1"/>
<dbReference type="EMBL" id="AE014075">
    <property type="protein sequence ID" value="AAN80876.1"/>
    <property type="status" value="ALT_INIT"/>
    <property type="molecule type" value="Genomic_DNA"/>
</dbReference>
<dbReference type="RefSeq" id="WP_001325918.1">
    <property type="nucleotide sequence ID" value="NZ_CP051263.1"/>
</dbReference>
<dbReference type="SMR" id="Q8FGG0"/>
<dbReference type="STRING" id="199310.c2417"/>
<dbReference type="MEROPS" id="M90.001"/>
<dbReference type="KEGG" id="ecc:c2417"/>
<dbReference type="eggNOG" id="COG3228">
    <property type="taxonomic scope" value="Bacteria"/>
</dbReference>
<dbReference type="HOGENOM" id="CLU_063037_0_1_6"/>
<dbReference type="Proteomes" id="UP000001410">
    <property type="component" value="Chromosome"/>
</dbReference>
<dbReference type="GO" id="GO:0005829">
    <property type="term" value="C:cytosol"/>
    <property type="evidence" value="ECO:0007669"/>
    <property type="project" value="TreeGrafter"/>
</dbReference>
<dbReference type="GO" id="GO:0004177">
    <property type="term" value="F:aminopeptidase activity"/>
    <property type="evidence" value="ECO:0007669"/>
    <property type="project" value="UniProtKB-UniRule"/>
</dbReference>
<dbReference type="GO" id="GO:0008237">
    <property type="term" value="F:metallopeptidase activity"/>
    <property type="evidence" value="ECO:0007669"/>
    <property type="project" value="UniProtKB-UniRule"/>
</dbReference>
<dbReference type="GO" id="GO:0008270">
    <property type="term" value="F:zinc ion binding"/>
    <property type="evidence" value="ECO:0007669"/>
    <property type="project" value="UniProtKB-UniRule"/>
</dbReference>
<dbReference type="GO" id="GO:0006508">
    <property type="term" value="P:proteolysis"/>
    <property type="evidence" value="ECO:0007669"/>
    <property type="project" value="UniProtKB-KW"/>
</dbReference>
<dbReference type="CDD" id="cd20169">
    <property type="entry name" value="Peptidase_M90_mtfA"/>
    <property type="match status" value="1"/>
</dbReference>
<dbReference type="FunFam" id="1.10.472.150:FF:000001">
    <property type="entry name" value="Protein MtfA"/>
    <property type="match status" value="1"/>
</dbReference>
<dbReference type="FunFam" id="3.40.390.10:FF:000012">
    <property type="entry name" value="Protein MtfA"/>
    <property type="match status" value="1"/>
</dbReference>
<dbReference type="Gene3D" id="3.40.390.10">
    <property type="entry name" value="Collagenase (Catalytic Domain)"/>
    <property type="match status" value="1"/>
</dbReference>
<dbReference type="Gene3D" id="1.10.472.150">
    <property type="entry name" value="Glucose-regulated metallo-peptidase M90, N-terminal domain"/>
    <property type="match status" value="1"/>
</dbReference>
<dbReference type="HAMAP" id="MF_01593">
    <property type="entry name" value="MtfA"/>
    <property type="match status" value="1"/>
</dbReference>
<dbReference type="InterPro" id="IPR024079">
    <property type="entry name" value="MetalloPept_cat_dom_sf"/>
</dbReference>
<dbReference type="InterPro" id="IPR057256">
    <property type="entry name" value="MtfA_enterob"/>
</dbReference>
<dbReference type="InterPro" id="IPR010384">
    <property type="entry name" value="MtfA_fam"/>
</dbReference>
<dbReference type="InterPro" id="IPR042252">
    <property type="entry name" value="MtfA_N"/>
</dbReference>
<dbReference type="NCBIfam" id="NF011939">
    <property type="entry name" value="PRK15410.1"/>
    <property type="match status" value="1"/>
</dbReference>
<dbReference type="PANTHER" id="PTHR30164">
    <property type="entry name" value="MTFA PEPTIDASE"/>
    <property type="match status" value="1"/>
</dbReference>
<dbReference type="PANTHER" id="PTHR30164:SF2">
    <property type="entry name" value="PROTEIN MTFA"/>
    <property type="match status" value="1"/>
</dbReference>
<dbReference type="Pfam" id="PF06167">
    <property type="entry name" value="Peptidase_M90"/>
    <property type="match status" value="1"/>
</dbReference>
<dbReference type="SUPFAM" id="SSF55486">
    <property type="entry name" value="Metalloproteases ('zincins'), catalytic domain"/>
    <property type="match status" value="1"/>
</dbReference>
<gene>
    <name evidence="1" type="primary">mtfA</name>
    <name type="ordered locus">c2417</name>
</gene>